<name>Y388_SHEFN</name>
<proteinExistence type="inferred from homology"/>
<organism>
    <name type="scientific">Shewanella frigidimarina (strain NCIMB 400)</name>
    <dbReference type="NCBI Taxonomy" id="318167"/>
    <lineage>
        <taxon>Bacteria</taxon>
        <taxon>Pseudomonadati</taxon>
        <taxon>Pseudomonadota</taxon>
        <taxon>Gammaproteobacteria</taxon>
        <taxon>Alteromonadales</taxon>
        <taxon>Shewanellaceae</taxon>
        <taxon>Shewanella</taxon>
    </lineage>
</organism>
<sequence length="108" mass="12549">MNSGQLAEQHARTYLEQQGLTFVDANVRYPFGEIDLIMRQQDVWVFVEVKFRSSNQFGGALNALTSKQITRIRLAAEHYLQRQKLNPPCRFDVIAMNIDEINWLQGCF</sequence>
<feature type="chain" id="PRO_1000009259" description="UPF0102 protein Sfri_0388">
    <location>
        <begin position="1"/>
        <end position="108"/>
    </location>
</feature>
<gene>
    <name type="ordered locus">Sfri_0388</name>
</gene>
<dbReference type="EMBL" id="CP000447">
    <property type="protein sequence ID" value="ABI70251.1"/>
    <property type="molecule type" value="Genomic_DNA"/>
</dbReference>
<dbReference type="RefSeq" id="WP_011635878.1">
    <property type="nucleotide sequence ID" value="NC_008345.1"/>
</dbReference>
<dbReference type="SMR" id="Q088R4"/>
<dbReference type="STRING" id="318167.Sfri_0388"/>
<dbReference type="KEGG" id="sfr:Sfri_0388"/>
<dbReference type="eggNOG" id="COG0792">
    <property type="taxonomic scope" value="Bacteria"/>
</dbReference>
<dbReference type="HOGENOM" id="CLU_115353_1_1_6"/>
<dbReference type="OrthoDB" id="9794876at2"/>
<dbReference type="Proteomes" id="UP000000684">
    <property type="component" value="Chromosome"/>
</dbReference>
<dbReference type="GO" id="GO:0003676">
    <property type="term" value="F:nucleic acid binding"/>
    <property type="evidence" value="ECO:0007669"/>
    <property type="project" value="InterPro"/>
</dbReference>
<dbReference type="CDD" id="cd20736">
    <property type="entry name" value="PoNe_Nuclease"/>
    <property type="match status" value="1"/>
</dbReference>
<dbReference type="Gene3D" id="3.40.1350.10">
    <property type="match status" value="1"/>
</dbReference>
<dbReference type="HAMAP" id="MF_00048">
    <property type="entry name" value="UPF0102"/>
    <property type="match status" value="1"/>
</dbReference>
<dbReference type="InterPro" id="IPR011335">
    <property type="entry name" value="Restrct_endonuc-II-like"/>
</dbReference>
<dbReference type="InterPro" id="IPR011856">
    <property type="entry name" value="tRNA_endonuc-like_dom_sf"/>
</dbReference>
<dbReference type="InterPro" id="IPR003509">
    <property type="entry name" value="UPF0102_YraN-like"/>
</dbReference>
<dbReference type="NCBIfam" id="NF009150">
    <property type="entry name" value="PRK12497.1-3"/>
    <property type="match status" value="1"/>
</dbReference>
<dbReference type="NCBIfam" id="TIGR00252">
    <property type="entry name" value="YraN family protein"/>
    <property type="match status" value="1"/>
</dbReference>
<dbReference type="PANTHER" id="PTHR34039">
    <property type="entry name" value="UPF0102 PROTEIN YRAN"/>
    <property type="match status" value="1"/>
</dbReference>
<dbReference type="PANTHER" id="PTHR34039:SF1">
    <property type="entry name" value="UPF0102 PROTEIN YRAN"/>
    <property type="match status" value="1"/>
</dbReference>
<dbReference type="Pfam" id="PF02021">
    <property type="entry name" value="UPF0102"/>
    <property type="match status" value="1"/>
</dbReference>
<dbReference type="SUPFAM" id="SSF52980">
    <property type="entry name" value="Restriction endonuclease-like"/>
    <property type="match status" value="1"/>
</dbReference>
<protein>
    <recommendedName>
        <fullName evidence="1">UPF0102 protein Sfri_0388</fullName>
    </recommendedName>
</protein>
<evidence type="ECO:0000255" key="1">
    <source>
        <dbReference type="HAMAP-Rule" id="MF_00048"/>
    </source>
</evidence>
<accession>Q088R4</accession>
<comment type="similarity">
    <text evidence="1">Belongs to the UPF0102 family.</text>
</comment>
<keyword id="KW-1185">Reference proteome</keyword>
<reference key="1">
    <citation type="submission" date="2006-08" db="EMBL/GenBank/DDBJ databases">
        <title>Complete sequence of Shewanella frigidimarina NCIMB 400.</title>
        <authorList>
            <consortium name="US DOE Joint Genome Institute"/>
            <person name="Copeland A."/>
            <person name="Lucas S."/>
            <person name="Lapidus A."/>
            <person name="Barry K."/>
            <person name="Detter J.C."/>
            <person name="Glavina del Rio T."/>
            <person name="Hammon N."/>
            <person name="Israni S."/>
            <person name="Dalin E."/>
            <person name="Tice H."/>
            <person name="Pitluck S."/>
            <person name="Fredrickson J.K."/>
            <person name="Kolker E."/>
            <person name="McCuel L.A."/>
            <person name="DiChristina T."/>
            <person name="Nealson K.H."/>
            <person name="Newman D."/>
            <person name="Tiedje J.M."/>
            <person name="Zhou J."/>
            <person name="Romine M.F."/>
            <person name="Culley D.E."/>
            <person name="Serres M."/>
            <person name="Chertkov O."/>
            <person name="Brettin T."/>
            <person name="Bruce D."/>
            <person name="Han C."/>
            <person name="Tapia R."/>
            <person name="Gilna P."/>
            <person name="Schmutz J."/>
            <person name="Larimer F."/>
            <person name="Land M."/>
            <person name="Hauser L."/>
            <person name="Kyrpides N."/>
            <person name="Mikhailova N."/>
            <person name="Richardson P."/>
        </authorList>
    </citation>
    <scope>NUCLEOTIDE SEQUENCE [LARGE SCALE GENOMIC DNA]</scope>
    <source>
        <strain>NCIMB 400</strain>
    </source>
</reference>